<gene>
    <name type="primary">Plekhg5</name>
    <name type="synonym">Tech</name>
</gene>
<accession>Q6RFZ7</accession>
<name>PKHG5_RAT</name>
<protein>
    <recommendedName>
        <fullName>Pleckstrin homology domain-containing family G member 5</fullName>
        <shortName>PH domain-containing family G member 5</shortName>
    </recommendedName>
    <alternativeName>
        <fullName>Neuronal RhoA GEF protein</fullName>
    </alternativeName>
    <alternativeName>
        <fullName>Transcript highly enriched in cortex and hippocampus</fullName>
    </alternativeName>
</protein>
<evidence type="ECO:0000250" key="1">
    <source>
        <dbReference type="UniProtKB" id="O94827"/>
    </source>
</evidence>
<evidence type="ECO:0000250" key="2">
    <source>
        <dbReference type="UniProtKB" id="Q66T02"/>
    </source>
</evidence>
<evidence type="ECO:0000255" key="3">
    <source>
        <dbReference type="PROSITE-ProRule" id="PRU00062"/>
    </source>
</evidence>
<evidence type="ECO:0000255" key="4">
    <source>
        <dbReference type="PROSITE-ProRule" id="PRU00145"/>
    </source>
</evidence>
<evidence type="ECO:0000256" key="5">
    <source>
        <dbReference type="SAM" id="MobiDB-lite"/>
    </source>
</evidence>
<evidence type="ECO:0000269" key="6">
    <source>
    </source>
</evidence>
<evidence type="ECO:0000269" key="7">
    <source>
    </source>
</evidence>
<organism>
    <name type="scientific">Rattus norvegicus</name>
    <name type="common">Rat</name>
    <dbReference type="NCBI Taxonomy" id="10116"/>
    <lineage>
        <taxon>Eukaryota</taxon>
        <taxon>Metazoa</taxon>
        <taxon>Chordata</taxon>
        <taxon>Craniata</taxon>
        <taxon>Vertebrata</taxon>
        <taxon>Euteleostomi</taxon>
        <taxon>Mammalia</taxon>
        <taxon>Eutheria</taxon>
        <taxon>Euarchontoglires</taxon>
        <taxon>Glires</taxon>
        <taxon>Rodentia</taxon>
        <taxon>Myomorpha</taxon>
        <taxon>Muroidea</taxon>
        <taxon>Muridae</taxon>
        <taxon>Murinae</taxon>
        <taxon>Rattus</taxon>
    </lineage>
</organism>
<dbReference type="EMBL" id="AY499658">
    <property type="protein sequence ID" value="AAR89949.1"/>
    <property type="molecule type" value="mRNA"/>
</dbReference>
<dbReference type="RefSeq" id="NP_958429.1">
    <property type="nucleotide sequence ID" value="NM_201272.2"/>
</dbReference>
<dbReference type="RefSeq" id="XP_038965666.1">
    <property type="nucleotide sequence ID" value="XM_039109738.2"/>
</dbReference>
<dbReference type="RefSeq" id="XP_038965667.1">
    <property type="nucleotide sequence ID" value="XM_039109739.2"/>
</dbReference>
<dbReference type="SMR" id="Q6RFZ7"/>
<dbReference type="BioGRID" id="259803">
    <property type="interactions" value="1"/>
</dbReference>
<dbReference type="FunCoup" id="Q6RFZ7">
    <property type="interactions" value="573"/>
</dbReference>
<dbReference type="IntAct" id="Q6RFZ7">
    <property type="interactions" value="1"/>
</dbReference>
<dbReference type="STRING" id="10116.ENSRNOP00000071902"/>
<dbReference type="CarbonylDB" id="Q6RFZ7"/>
<dbReference type="GlyGen" id="Q6RFZ7">
    <property type="glycosylation" value="1 site"/>
</dbReference>
<dbReference type="PhosphoSitePlus" id="Q6RFZ7"/>
<dbReference type="PaxDb" id="10116-ENSRNOP00000059729"/>
<dbReference type="Ensembl" id="ENSRNOT00000064841.3">
    <property type="protein sequence ID" value="ENSRNOP00000059729.1"/>
    <property type="gene ID" value="ENSRNOG00000022694.7"/>
</dbReference>
<dbReference type="GeneID" id="310999"/>
<dbReference type="KEGG" id="rno:310999"/>
<dbReference type="UCSC" id="RGD:1303132">
    <property type="organism name" value="rat"/>
</dbReference>
<dbReference type="AGR" id="RGD:1303132"/>
<dbReference type="CTD" id="57449"/>
<dbReference type="RGD" id="1303132">
    <property type="gene designation" value="Plekhg5"/>
</dbReference>
<dbReference type="eggNOG" id="KOG3521">
    <property type="taxonomic scope" value="Eukaryota"/>
</dbReference>
<dbReference type="GeneTree" id="ENSGT00510000046843"/>
<dbReference type="InParanoid" id="Q6RFZ7"/>
<dbReference type="Reactome" id="R-RNO-193648">
    <property type="pathway name" value="NRAGE signals death through JNK"/>
</dbReference>
<dbReference type="Reactome" id="R-RNO-416482">
    <property type="pathway name" value="G alpha (12/13) signalling events"/>
</dbReference>
<dbReference type="Reactome" id="R-RNO-8980692">
    <property type="pathway name" value="RHOA GTPase cycle"/>
</dbReference>
<dbReference type="Reactome" id="R-RNO-9696264">
    <property type="pathway name" value="RND3 GTPase cycle"/>
</dbReference>
<dbReference type="Reactome" id="R-RNO-9696273">
    <property type="pathway name" value="RND1 GTPase cycle"/>
</dbReference>
<dbReference type="PRO" id="PR:Q6RFZ7"/>
<dbReference type="Proteomes" id="UP000002494">
    <property type="component" value="Chromosome 5"/>
</dbReference>
<dbReference type="Bgee" id="ENSRNOG00000022694">
    <property type="expression patterns" value="Expressed in frontal cortex and 19 other cell types or tissues"/>
</dbReference>
<dbReference type="ExpressionAtlas" id="Q6RFZ7">
    <property type="expression patterns" value="baseline and differential"/>
</dbReference>
<dbReference type="GO" id="GO:0030424">
    <property type="term" value="C:axon"/>
    <property type="evidence" value="ECO:0000318"/>
    <property type="project" value="GO_Central"/>
</dbReference>
<dbReference type="GO" id="GO:0005911">
    <property type="term" value="C:cell-cell junction"/>
    <property type="evidence" value="ECO:0000250"/>
    <property type="project" value="UniProtKB"/>
</dbReference>
<dbReference type="GO" id="GO:0005737">
    <property type="term" value="C:cytoplasm"/>
    <property type="evidence" value="ECO:0000250"/>
    <property type="project" value="UniProtKB"/>
</dbReference>
<dbReference type="GO" id="GO:0030139">
    <property type="term" value="C:endocytic vesicle"/>
    <property type="evidence" value="ECO:0000250"/>
    <property type="project" value="UniProtKB"/>
</dbReference>
<dbReference type="GO" id="GO:0030027">
    <property type="term" value="C:lamellipodium"/>
    <property type="evidence" value="ECO:0000250"/>
    <property type="project" value="UniProtKB"/>
</dbReference>
<dbReference type="GO" id="GO:0048471">
    <property type="term" value="C:perinuclear region of cytoplasm"/>
    <property type="evidence" value="ECO:0007669"/>
    <property type="project" value="UniProtKB-SubCell"/>
</dbReference>
<dbReference type="GO" id="GO:0005886">
    <property type="term" value="C:plasma membrane"/>
    <property type="evidence" value="ECO:0000266"/>
    <property type="project" value="RGD"/>
</dbReference>
<dbReference type="GO" id="GO:0098793">
    <property type="term" value="C:presynapse"/>
    <property type="evidence" value="ECO:0007669"/>
    <property type="project" value="GOC"/>
</dbReference>
<dbReference type="GO" id="GO:0005085">
    <property type="term" value="F:guanyl-nucleotide exchange factor activity"/>
    <property type="evidence" value="ECO:0000266"/>
    <property type="project" value="RGD"/>
</dbReference>
<dbReference type="GO" id="GO:0035767">
    <property type="term" value="P:endothelial cell chemotaxis"/>
    <property type="evidence" value="ECO:0000250"/>
    <property type="project" value="UniProtKB"/>
</dbReference>
<dbReference type="GO" id="GO:0043542">
    <property type="term" value="P:endothelial cell migration"/>
    <property type="evidence" value="ECO:0000266"/>
    <property type="project" value="RGD"/>
</dbReference>
<dbReference type="GO" id="GO:0140251">
    <property type="term" value="P:regulation protein catabolic process at presynapse"/>
    <property type="evidence" value="ECO:0000266"/>
    <property type="project" value="RGD"/>
</dbReference>
<dbReference type="GO" id="GO:0007266">
    <property type="term" value="P:Rho protein signal transduction"/>
    <property type="evidence" value="ECO:0000318"/>
    <property type="project" value="GO_Central"/>
</dbReference>
<dbReference type="CDD" id="cd13244">
    <property type="entry name" value="PH_PLEKHG5_G6"/>
    <property type="match status" value="1"/>
</dbReference>
<dbReference type="CDD" id="cd17068">
    <property type="entry name" value="RBD_PLEKHG5"/>
    <property type="match status" value="1"/>
</dbReference>
<dbReference type="CDD" id="cd00160">
    <property type="entry name" value="RhoGEF"/>
    <property type="match status" value="1"/>
</dbReference>
<dbReference type="FunFam" id="2.30.29.30:FF:000141">
    <property type="entry name" value="Pleckstrin homology domain-containing family G member 5"/>
    <property type="match status" value="1"/>
</dbReference>
<dbReference type="FunFam" id="1.20.900.10:FF:000017">
    <property type="entry name" value="pleckstrin homology domain-containing family G member 5 isoform X1"/>
    <property type="match status" value="1"/>
</dbReference>
<dbReference type="Gene3D" id="1.20.900.10">
    <property type="entry name" value="Dbl homology (DH) domain"/>
    <property type="match status" value="1"/>
</dbReference>
<dbReference type="Gene3D" id="2.30.29.30">
    <property type="entry name" value="Pleckstrin-homology domain (PH domain)/Phosphotyrosine-binding domain (PTB)"/>
    <property type="match status" value="1"/>
</dbReference>
<dbReference type="InterPro" id="IPR035899">
    <property type="entry name" value="DBL_dom_sf"/>
</dbReference>
<dbReference type="InterPro" id="IPR000219">
    <property type="entry name" value="DH_dom"/>
</dbReference>
<dbReference type="InterPro" id="IPR011993">
    <property type="entry name" value="PH-like_dom_sf"/>
</dbReference>
<dbReference type="InterPro" id="IPR001849">
    <property type="entry name" value="PH_domain"/>
</dbReference>
<dbReference type="InterPro" id="IPR040181">
    <property type="entry name" value="PKHG5/7"/>
</dbReference>
<dbReference type="InterPro" id="IPR055251">
    <property type="entry name" value="SOS1_NGEF_PH"/>
</dbReference>
<dbReference type="InterPro" id="IPR029071">
    <property type="entry name" value="Ubiquitin-like_domsf"/>
</dbReference>
<dbReference type="PANTHER" id="PTHR13217:SF11">
    <property type="entry name" value="PLECKSTRIN HOMOLOGY DOMAIN-CONTAINING FAMILY G MEMBER 5"/>
    <property type="match status" value="1"/>
</dbReference>
<dbReference type="PANTHER" id="PTHR13217">
    <property type="entry name" value="PLECKSTRIN HOMOLOGY DOMAIN-CONTAINING FAMILY G MEMBER 7"/>
    <property type="match status" value="1"/>
</dbReference>
<dbReference type="Pfam" id="PF00621">
    <property type="entry name" value="RhoGEF"/>
    <property type="match status" value="1"/>
</dbReference>
<dbReference type="Pfam" id="PF22697">
    <property type="entry name" value="SOS1_NGEF_PH"/>
    <property type="match status" value="1"/>
</dbReference>
<dbReference type="SMART" id="SM00233">
    <property type="entry name" value="PH"/>
    <property type="match status" value="1"/>
</dbReference>
<dbReference type="SMART" id="SM00325">
    <property type="entry name" value="RhoGEF"/>
    <property type="match status" value="1"/>
</dbReference>
<dbReference type="SUPFAM" id="SSF48065">
    <property type="entry name" value="DBL homology domain (DH-domain)"/>
    <property type="match status" value="1"/>
</dbReference>
<dbReference type="SUPFAM" id="SSF50729">
    <property type="entry name" value="PH domain-like"/>
    <property type="match status" value="1"/>
</dbReference>
<dbReference type="SUPFAM" id="SSF54236">
    <property type="entry name" value="Ubiquitin-like"/>
    <property type="match status" value="1"/>
</dbReference>
<dbReference type="PROSITE" id="PS50010">
    <property type="entry name" value="DH_2"/>
    <property type="match status" value="1"/>
</dbReference>
<dbReference type="PROSITE" id="PS50003">
    <property type="entry name" value="PH_DOMAIN"/>
    <property type="match status" value="1"/>
</dbReference>
<feature type="chain" id="PRO_0000307136" description="Pleckstrin homology domain-containing family G member 5">
    <location>
        <begin position="1"/>
        <end position="1039"/>
    </location>
</feature>
<feature type="domain" description="DH" evidence="3">
    <location>
        <begin position="372"/>
        <end position="564"/>
    </location>
</feature>
<feature type="domain" description="PH" evidence="4">
    <location>
        <begin position="620"/>
        <end position="720"/>
    </location>
</feature>
<feature type="region of interest" description="Disordered" evidence="5">
    <location>
        <begin position="58"/>
        <end position="105"/>
    </location>
</feature>
<feature type="region of interest" description="Disordered" evidence="5">
    <location>
        <begin position="185"/>
        <end position="277"/>
    </location>
</feature>
<feature type="region of interest" description="Disordered" evidence="5">
    <location>
        <begin position="739"/>
        <end position="785"/>
    </location>
</feature>
<feature type="region of interest" description="Disordered" evidence="5">
    <location>
        <begin position="800"/>
        <end position="836"/>
    </location>
</feature>
<feature type="region of interest" description="Disordered" evidence="5">
    <location>
        <begin position="967"/>
        <end position="989"/>
    </location>
</feature>
<feature type="compositionally biased region" description="Basic and acidic residues" evidence="5">
    <location>
        <begin position="185"/>
        <end position="199"/>
    </location>
</feature>
<feature type="compositionally biased region" description="Basic and acidic residues" evidence="5">
    <location>
        <begin position="217"/>
        <end position="228"/>
    </location>
</feature>
<feature type="compositionally biased region" description="Low complexity" evidence="5">
    <location>
        <begin position="259"/>
        <end position="277"/>
    </location>
</feature>
<feature type="compositionally biased region" description="Acidic residues" evidence="5">
    <location>
        <begin position="744"/>
        <end position="757"/>
    </location>
</feature>
<feature type="compositionally biased region" description="Polar residues" evidence="5">
    <location>
        <begin position="758"/>
        <end position="776"/>
    </location>
</feature>
<feature type="compositionally biased region" description="Polar residues" evidence="5">
    <location>
        <begin position="811"/>
        <end position="831"/>
    </location>
</feature>
<feature type="modified residue" description="Phosphothreonine" evidence="2">
    <location>
        <position position="760"/>
    </location>
</feature>
<feature type="modified residue" description="Phosphoserine" evidence="2">
    <location>
        <position position="765"/>
    </location>
</feature>
<feature type="modified residue" description="Phosphothreonine" evidence="2">
    <location>
        <position position="876"/>
    </location>
</feature>
<feature type="modified residue" description="Phosphoserine" evidence="2">
    <location>
        <position position="878"/>
    </location>
</feature>
<feature type="modified residue" description="Phosphoserine" evidence="2">
    <location>
        <position position="903"/>
    </location>
</feature>
<feature type="modified residue" description="Phosphoserine" evidence="2">
    <location>
        <position position="908"/>
    </location>
</feature>
<feature type="mutagenesis site" description="No binding to RhoA." evidence="6">
    <original>L</original>
    <variation>E</variation>
    <location>
        <position position="530"/>
    </location>
</feature>
<reference key="1">
    <citation type="journal article" date="2005" name="J. Neurochem.">
        <title>Tech: a RhoA GEF selectively expressed in hippocampal and cortical neurons.</title>
        <authorList>
            <person name="Marx R."/>
            <person name="Henderson J."/>
            <person name="Wang J."/>
            <person name="Baraban J.M."/>
        </authorList>
    </citation>
    <scope>NUCLEOTIDE SEQUENCE [MRNA]</scope>
    <scope>TISSUE SPECIFICITY</scope>
    <scope>MUTAGENESIS OF LEU-530</scope>
</reference>
<reference key="2">
    <citation type="journal article" date="2006" name="Mol. Biol. Cell">
        <title>A PDZ-binding motif as a critical determinant of Rho guanine exchange factor function and cell phenotype.</title>
        <authorList>
            <person name="Liu M."/>
            <person name="Horowitz A."/>
        </authorList>
    </citation>
    <scope>INTERACTION WITH GIPC1 AND RHOA</scope>
    <scope>SUBCELLULAR LOCATION</scope>
    <scope>TISSUE SPECIFICITY</scope>
</reference>
<sequence>MDKGRAAKVCHHADCQQLHHRGPLNLCEICDSKFHNTTHYDGHVRFDLPPQGSVLARNVSTRSCPPRTSPAGDLEEEDEGYTNGKGDRKSAGLKISKKKARRRHTDDPSKECFTLKFDLNVDIETEIVPAMKKKSLGEVLLPVFERKGIALGKVDIYLDQSNTPLSLTFEAYRFGGHYLRVKAKPGDEGKVEQGVKDSKSLSLPALRPSGAGTPVLERVDPQSRRESSLDILAPGRRRKNMSEFLGDTSIPGQESPAPSSCSLPVGSSVGSSGSSESWKNRAASRFSGFFSSSPSTGAFGREVDKMEQLESKLHAYSLFGLPRMPRRLRFDHDSWEEEEDDEEEEDNSGLRLEDSWRELIDGHEKLTRRQCHQQEAVWELLHTEVSYIRKLRVITNLFLCCLLNLQESGLLCEVEAERLFSNIPELARLHRGLWSSVMVPVLEKARRTRALLQPSDFLKGFKMFGSLFKPYIRYCMEEEGCMEYMRSLLRDNDLFRAYVTWAEKHQQCQRLKLSDMLAKPHQRLTKYPLLLKSVLRKTDEPRAKEAIITMISSVERFIHHVNTCMRQRQERQRLAGVVSRIDAYEVVEGSNDEVDKFLKEFLHLDLTAPMPGTSPEETRQLLLEGSLRMKEGKDSKMDVYCFLFTDLLLVTKAVKKAERTKVIRPPLLVDKIVCRELRDPGSFLLIHLNEFHSAVGAYTFQASSQALCRSWVDTLYNAQNQLQQLRAQLLCAQEHPGTQHLQSLEEEEDEQEEEGEESGTSAASSPTILRKSSNSLDSEHCASDGSTETLAMVVVEPGETLSSPEFDRGPFSSQSDEASLSNTTSSITPTSELLPLGPVDGRSCSMDSAYGTLSPTSLQDFAAPHPVVEPVPVPQTLSPQPSPRLRRRTPVQLLPRLPHLLKSKSEASLLQLLSGTTTSVSPPAPSRSLSELCLITMAPGVRTQSSLQEGGPGWNCPGACGPCQGPPLSESENRPSHKAGGPADSARRKCREMPCGTVPRVQPEPSPGISAQHRKLTLAQLYRIRTTLLLNSTLTASEV</sequence>
<keyword id="KW-0965">Cell junction</keyword>
<keyword id="KW-1003">Cell membrane</keyword>
<keyword id="KW-0966">Cell projection</keyword>
<keyword id="KW-0963">Cytoplasm</keyword>
<keyword id="KW-0472">Membrane</keyword>
<keyword id="KW-0597">Phosphoprotein</keyword>
<keyword id="KW-1185">Reference proteome</keyword>
<comment type="function">
    <text evidence="1 2">Functions as a guanine exchange factor (GEF) for RAB26 and thus regulates autophagy of synaptic vesicles in axon terminal of motoneurons (By similarity). Involved in the control of neuronal cell differentiation. Plays a role in angiogenesis through regulation of endothelial cells chemotaxis. Also affects the migration, adhesion, and matrix/bone degradation in macrophages and osteoclasts (By similarity).</text>
</comment>
<comment type="subunit">
    <text evidence="7">Interacts with GIPC1/synectin and RHOA.</text>
</comment>
<comment type="interaction">
    <interactant intactId="EBI-9079908">
        <id>Q6RFZ7</id>
    </interactant>
    <interactant intactId="EBI-991162">
        <id>Q9Z254</id>
        <label>Gipc1</label>
    </interactant>
    <organismsDiffer>false</organismsDiffer>
    <experiments>3</experiments>
</comment>
<comment type="subcellular location">
    <subcellularLocation>
        <location evidence="7">Cytoplasm</location>
    </subcellularLocation>
    <subcellularLocation>
        <location evidence="7">Cytoplasm</location>
        <location evidence="7">Perinuclear region</location>
    </subcellularLocation>
    <subcellularLocation>
        <location evidence="7">Cell membrane</location>
    </subcellularLocation>
    <subcellularLocation>
        <location evidence="2">Cell junction</location>
    </subcellularLocation>
    <subcellularLocation>
        <location evidence="2">Cell projection</location>
        <location evidence="2">Lamellipodium</location>
    </subcellularLocation>
    <text evidence="2 7">Predominantly cytoplasmic, however when endothelial cells are stimulated with lysophosphatidic acid, PLEKHG5 is found in perinuclear regions and at the cell membrane (PubMed:16467373). Localizes at cell-cell junctions in quiescent endothelial cells, and relocalizes to cytoplasmic vesicle and the leading edge of lamellipodia in migrating endothelial cells (By similarity).</text>
</comment>
<comment type="tissue specificity">
    <text evidence="6 7">Selectively expressed in cortical and hippocampal neurons with prominent expression in the cell bodies and dendrites. Weakly expressed in rat fad pad ECs (RFPECs).</text>
</comment>
<proteinExistence type="evidence at protein level"/>